<protein>
    <recommendedName>
        <fullName evidence="1">Methylglyoxal synthase</fullName>
        <shortName evidence="1">MGS</shortName>
        <ecNumber evidence="1">4.2.3.3</ecNumber>
    </recommendedName>
</protein>
<comment type="function">
    <text evidence="1">Catalyzes the formation of methylglyoxal from dihydroxyacetone phosphate.</text>
</comment>
<comment type="catalytic activity">
    <reaction evidence="1">
        <text>dihydroxyacetone phosphate = methylglyoxal + phosphate</text>
        <dbReference type="Rhea" id="RHEA:17937"/>
        <dbReference type="ChEBI" id="CHEBI:17158"/>
        <dbReference type="ChEBI" id="CHEBI:43474"/>
        <dbReference type="ChEBI" id="CHEBI:57642"/>
        <dbReference type="EC" id="4.2.3.3"/>
    </reaction>
</comment>
<comment type="similarity">
    <text evidence="1">Belongs to the methylglyoxal synthase family.</text>
</comment>
<sequence>MELTTRTIAARKHIALVSHDHCKKSLLAWVMENRDLLAQHELYATGTTGNLVQKATGIDVHCLLSGPMGGDQEVGALISEKKIDILIFFWDPLNAVPHDPDVKALLRLATVWNIPVATNRSTADFLIGSTLFSSEVTIAIPDYDRYMQQRLDLK</sequence>
<name>MGSA_YERPY</name>
<accession>B1JQQ0</accession>
<organism>
    <name type="scientific">Yersinia pseudotuberculosis serotype O:3 (strain YPIII)</name>
    <dbReference type="NCBI Taxonomy" id="502800"/>
    <lineage>
        <taxon>Bacteria</taxon>
        <taxon>Pseudomonadati</taxon>
        <taxon>Pseudomonadota</taxon>
        <taxon>Gammaproteobacteria</taxon>
        <taxon>Enterobacterales</taxon>
        <taxon>Yersiniaceae</taxon>
        <taxon>Yersinia</taxon>
    </lineage>
</organism>
<dbReference type="EC" id="4.2.3.3" evidence="1"/>
<dbReference type="EMBL" id="CP000950">
    <property type="protein sequence ID" value="ACA68901.1"/>
    <property type="molecule type" value="Genomic_DNA"/>
</dbReference>
<dbReference type="RefSeq" id="WP_002213060.1">
    <property type="nucleotide sequence ID" value="NZ_CP009792.1"/>
</dbReference>
<dbReference type="SMR" id="B1JQQ0"/>
<dbReference type="KEGG" id="ypy:YPK_2624"/>
<dbReference type="PATRIC" id="fig|502800.11.peg.3323"/>
<dbReference type="GO" id="GO:0005829">
    <property type="term" value="C:cytosol"/>
    <property type="evidence" value="ECO:0007669"/>
    <property type="project" value="TreeGrafter"/>
</dbReference>
<dbReference type="GO" id="GO:0008929">
    <property type="term" value="F:methylglyoxal synthase activity"/>
    <property type="evidence" value="ECO:0007669"/>
    <property type="project" value="UniProtKB-UniRule"/>
</dbReference>
<dbReference type="GO" id="GO:0019242">
    <property type="term" value="P:methylglyoxal biosynthetic process"/>
    <property type="evidence" value="ECO:0007669"/>
    <property type="project" value="UniProtKB-UniRule"/>
</dbReference>
<dbReference type="CDD" id="cd01422">
    <property type="entry name" value="MGS"/>
    <property type="match status" value="1"/>
</dbReference>
<dbReference type="FunFam" id="3.40.50.1380:FF:000002">
    <property type="entry name" value="Methylglyoxal synthase"/>
    <property type="match status" value="1"/>
</dbReference>
<dbReference type="Gene3D" id="3.40.50.1380">
    <property type="entry name" value="Methylglyoxal synthase-like domain"/>
    <property type="match status" value="1"/>
</dbReference>
<dbReference type="HAMAP" id="MF_00549">
    <property type="entry name" value="Methylglyoxal_synth"/>
    <property type="match status" value="1"/>
</dbReference>
<dbReference type="InterPro" id="IPR004363">
    <property type="entry name" value="Methylgl_synth"/>
</dbReference>
<dbReference type="InterPro" id="IPR018148">
    <property type="entry name" value="Methylglyoxal_synth_AS"/>
</dbReference>
<dbReference type="InterPro" id="IPR011607">
    <property type="entry name" value="MGS-like_dom"/>
</dbReference>
<dbReference type="InterPro" id="IPR036914">
    <property type="entry name" value="MGS-like_dom_sf"/>
</dbReference>
<dbReference type="NCBIfam" id="TIGR00160">
    <property type="entry name" value="MGSA"/>
    <property type="match status" value="1"/>
</dbReference>
<dbReference type="NCBIfam" id="NF003559">
    <property type="entry name" value="PRK05234.1"/>
    <property type="match status" value="1"/>
</dbReference>
<dbReference type="PANTHER" id="PTHR30492">
    <property type="entry name" value="METHYLGLYOXAL SYNTHASE"/>
    <property type="match status" value="1"/>
</dbReference>
<dbReference type="PANTHER" id="PTHR30492:SF0">
    <property type="entry name" value="METHYLGLYOXAL SYNTHASE"/>
    <property type="match status" value="1"/>
</dbReference>
<dbReference type="Pfam" id="PF02142">
    <property type="entry name" value="MGS"/>
    <property type="match status" value="1"/>
</dbReference>
<dbReference type="PIRSF" id="PIRSF006614">
    <property type="entry name" value="Methylglyox_syn"/>
    <property type="match status" value="1"/>
</dbReference>
<dbReference type="SMART" id="SM00851">
    <property type="entry name" value="MGS"/>
    <property type="match status" value="1"/>
</dbReference>
<dbReference type="SUPFAM" id="SSF52335">
    <property type="entry name" value="Methylglyoxal synthase-like"/>
    <property type="match status" value="1"/>
</dbReference>
<dbReference type="PROSITE" id="PS01335">
    <property type="entry name" value="METHYLGLYOXAL_SYNTH"/>
    <property type="match status" value="1"/>
</dbReference>
<dbReference type="PROSITE" id="PS51855">
    <property type="entry name" value="MGS"/>
    <property type="match status" value="1"/>
</dbReference>
<evidence type="ECO:0000255" key="1">
    <source>
        <dbReference type="HAMAP-Rule" id="MF_00549"/>
    </source>
</evidence>
<reference key="1">
    <citation type="submission" date="2008-02" db="EMBL/GenBank/DDBJ databases">
        <title>Complete sequence of Yersinia pseudotuberculosis YPIII.</title>
        <authorList>
            <consortium name="US DOE Joint Genome Institute"/>
            <person name="Copeland A."/>
            <person name="Lucas S."/>
            <person name="Lapidus A."/>
            <person name="Glavina del Rio T."/>
            <person name="Dalin E."/>
            <person name="Tice H."/>
            <person name="Bruce D."/>
            <person name="Goodwin L."/>
            <person name="Pitluck S."/>
            <person name="Munk A.C."/>
            <person name="Brettin T."/>
            <person name="Detter J.C."/>
            <person name="Han C."/>
            <person name="Tapia R."/>
            <person name="Schmutz J."/>
            <person name="Larimer F."/>
            <person name="Land M."/>
            <person name="Hauser L."/>
            <person name="Challacombe J.F."/>
            <person name="Green L."/>
            <person name="Lindler L.E."/>
            <person name="Nikolich M.P."/>
            <person name="Richardson P."/>
        </authorList>
    </citation>
    <scope>NUCLEOTIDE SEQUENCE [LARGE SCALE GENOMIC DNA]</scope>
    <source>
        <strain>YPIII</strain>
    </source>
</reference>
<proteinExistence type="inferred from homology"/>
<feature type="chain" id="PRO_1000129016" description="Methylglyoxal synthase">
    <location>
        <begin position="1"/>
        <end position="154"/>
    </location>
</feature>
<feature type="domain" description="MGS-like" evidence="1">
    <location>
        <begin position="1"/>
        <end position="154"/>
    </location>
</feature>
<feature type="active site" description="Proton donor/acceptor" evidence="1">
    <location>
        <position position="71"/>
    </location>
</feature>
<feature type="binding site" evidence="1">
    <location>
        <position position="19"/>
    </location>
    <ligand>
        <name>substrate</name>
    </ligand>
</feature>
<feature type="binding site" evidence="1">
    <location>
        <position position="23"/>
    </location>
    <ligand>
        <name>substrate</name>
    </ligand>
</feature>
<feature type="binding site" evidence="1">
    <location>
        <begin position="45"/>
        <end position="48"/>
    </location>
    <ligand>
        <name>substrate</name>
    </ligand>
</feature>
<feature type="binding site" evidence="1">
    <location>
        <begin position="65"/>
        <end position="66"/>
    </location>
    <ligand>
        <name>substrate</name>
    </ligand>
</feature>
<feature type="binding site" evidence="1">
    <location>
        <position position="98"/>
    </location>
    <ligand>
        <name>substrate</name>
    </ligand>
</feature>
<gene>
    <name evidence="1" type="primary">mgsA</name>
    <name type="ordered locus">YPK_2624</name>
</gene>
<keyword id="KW-0456">Lyase</keyword>